<protein>
    <recommendedName>
        <fullName evidence="1">Cytochrome b559 subunit alpha</fullName>
    </recommendedName>
    <alternativeName>
        <fullName evidence="1">PSII reaction center subunit V</fullName>
    </alternativeName>
</protein>
<keyword id="KW-0150">Chloroplast</keyword>
<keyword id="KW-0249">Electron transport</keyword>
<keyword id="KW-0349">Heme</keyword>
<keyword id="KW-0408">Iron</keyword>
<keyword id="KW-0472">Membrane</keyword>
<keyword id="KW-0479">Metal-binding</keyword>
<keyword id="KW-0602">Photosynthesis</keyword>
<keyword id="KW-0604">Photosystem II</keyword>
<keyword id="KW-0934">Plastid</keyword>
<keyword id="KW-1185">Reference proteome</keyword>
<keyword id="KW-0793">Thylakoid</keyword>
<keyword id="KW-0812">Transmembrane</keyword>
<keyword id="KW-1133">Transmembrane helix</keyword>
<keyword id="KW-0813">Transport</keyword>
<name>PSBE_CYAM1</name>
<dbReference type="EMBL" id="AB002583">
    <property type="protein sequence ID" value="BAC76293.1"/>
    <property type="molecule type" value="Genomic_DNA"/>
</dbReference>
<dbReference type="RefSeq" id="NP_849131.1">
    <property type="nucleotide sequence ID" value="NC_004799.1"/>
</dbReference>
<dbReference type="SMR" id="Q85FQ2"/>
<dbReference type="STRING" id="280699.Q85FQ2"/>
<dbReference type="EnsemblPlants" id="CMV231CT">
    <property type="protein sequence ID" value="CMV231CT"/>
    <property type="gene ID" value="CMV231C"/>
</dbReference>
<dbReference type="GeneID" id="844950"/>
<dbReference type="Gramene" id="CMV231CT">
    <property type="protein sequence ID" value="CMV231CT"/>
    <property type="gene ID" value="CMV231C"/>
</dbReference>
<dbReference type="KEGG" id="cme:CymeCp199"/>
<dbReference type="eggNOG" id="ENOG502S3QA">
    <property type="taxonomic scope" value="Eukaryota"/>
</dbReference>
<dbReference type="HOGENOM" id="CLU_194095_0_0_1"/>
<dbReference type="Proteomes" id="UP000007014">
    <property type="component" value="Chloroplast"/>
</dbReference>
<dbReference type="GO" id="GO:0009535">
    <property type="term" value="C:chloroplast thylakoid membrane"/>
    <property type="evidence" value="ECO:0007669"/>
    <property type="project" value="UniProtKB-SubCell"/>
</dbReference>
<dbReference type="GO" id="GO:0009539">
    <property type="term" value="C:photosystem II reaction center"/>
    <property type="evidence" value="ECO:0007669"/>
    <property type="project" value="InterPro"/>
</dbReference>
<dbReference type="GO" id="GO:0009055">
    <property type="term" value="F:electron transfer activity"/>
    <property type="evidence" value="ECO:0007669"/>
    <property type="project" value="UniProtKB-UniRule"/>
</dbReference>
<dbReference type="GO" id="GO:0020037">
    <property type="term" value="F:heme binding"/>
    <property type="evidence" value="ECO:0007669"/>
    <property type="project" value="InterPro"/>
</dbReference>
<dbReference type="GO" id="GO:0005506">
    <property type="term" value="F:iron ion binding"/>
    <property type="evidence" value="ECO:0007669"/>
    <property type="project" value="UniProtKB-UniRule"/>
</dbReference>
<dbReference type="GO" id="GO:0009767">
    <property type="term" value="P:photosynthetic electron transport chain"/>
    <property type="evidence" value="ECO:0007669"/>
    <property type="project" value="InterPro"/>
</dbReference>
<dbReference type="Gene3D" id="1.20.5.860">
    <property type="entry name" value="Photosystem II cytochrome b559, alpha subunit"/>
    <property type="match status" value="1"/>
</dbReference>
<dbReference type="HAMAP" id="MF_00642">
    <property type="entry name" value="PSII_PsbE"/>
    <property type="match status" value="1"/>
</dbReference>
<dbReference type="InterPro" id="IPR006217">
    <property type="entry name" value="PSII_cyt_b559_asu"/>
</dbReference>
<dbReference type="InterPro" id="IPR037025">
    <property type="entry name" value="PSII_cyt_b559_asu_sf"/>
</dbReference>
<dbReference type="InterPro" id="IPR006216">
    <property type="entry name" value="PSII_cyt_b559_CS"/>
</dbReference>
<dbReference type="InterPro" id="IPR013081">
    <property type="entry name" value="PSII_cyt_b559_N"/>
</dbReference>
<dbReference type="InterPro" id="IPR013082">
    <property type="entry name" value="PSII_cytb559_asu_lum"/>
</dbReference>
<dbReference type="NCBIfam" id="TIGR01332">
    <property type="entry name" value="cyt_b559_alpha"/>
    <property type="match status" value="1"/>
</dbReference>
<dbReference type="PANTHER" id="PTHR33391">
    <property type="entry name" value="CYTOCHROME B559 SUBUNIT BETA-RELATED"/>
    <property type="match status" value="1"/>
</dbReference>
<dbReference type="PANTHER" id="PTHR33391:SF9">
    <property type="entry name" value="CYTOCHROME B559 SUBUNIT BETA-RELATED"/>
    <property type="match status" value="1"/>
</dbReference>
<dbReference type="Pfam" id="PF00283">
    <property type="entry name" value="Cytochrom_B559"/>
    <property type="match status" value="1"/>
</dbReference>
<dbReference type="Pfam" id="PF00284">
    <property type="entry name" value="Cytochrom_B559a"/>
    <property type="match status" value="1"/>
</dbReference>
<dbReference type="PIRSF" id="PIRSF000036">
    <property type="entry name" value="PsbE"/>
    <property type="match status" value="1"/>
</dbReference>
<dbReference type="SUPFAM" id="SSF161045">
    <property type="entry name" value="Cytochrome b559 subunits"/>
    <property type="match status" value="1"/>
</dbReference>
<dbReference type="PROSITE" id="PS00537">
    <property type="entry name" value="CYTOCHROME_B559"/>
    <property type="match status" value="1"/>
</dbReference>
<geneLocation type="chloroplast"/>
<evidence type="ECO:0000255" key="1">
    <source>
        <dbReference type="HAMAP-Rule" id="MF_00642"/>
    </source>
</evidence>
<feature type="chain" id="PRO_0000200307" description="Cytochrome b559 subunit alpha">
    <location>
        <begin position="1"/>
        <end position="81"/>
    </location>
</feature>
<feature type="transmembrane region" description="Helical" evidence="1">
    <location>
        <begin position="22"/>
        <end position="36"/>
    </location>
</feature>
<feature type="binding site" description="axial binding residue" evidence="1">
    <location>
        <position position="24"/>
    </location>
    <ligand>
        <name>heme</name>
        <dbReference type="ChEBI" id="CHEBI:30413"/>
        <note>ligand shared with beta subunit</note>
    </ligand>
    <ligandPart>
        <name>Fe</name>
        <dbReference type="ChEBI" id="CHEBI:18248"/>
    </ligandPart>
</feature>
<reference key="1">
    <citation type="journal article" date="2003" name="DNA Res.">
        <title>Complete sequence and analysis of the plastid genome of the unicellular red alga Cyanidioschyzon merolae.</title>
        <authorList>
            <person name="Ohta N."/>
            <person name="Matsuzaki M."/>
            <person name="Misumi O."/>
            <person name="Miyagishima S.-Y."/>
            <person name="Nozaki H."/>
            <person name="Tanaka K."/>
            <person name="Shin-i T."/>
            <person name="Kohara Y."/>
            <person name="Kuroiwa T."/>
        </authorList>
    </citation>
    <scope>NUCLEOTIDE SEQUENCE [LARGE SCALE GENOMIC DNA]</scope>
    <source>
        <strain>NIES-3377 / 10D</strain>
    </source>
</reference>
<gene>
    <name evidence="1" type="primary">psbE</name>
</gene>
<sequence>MAGGSTGERPFSDIITSIRYWVIHSITIPSLFIAGWLFVSTGLAYDVFGTPRPNEYFTQERTQIPLVNDRFNAKQELEDLL</sequence>
<proteinExistence type="inferred from homology"/>
<organism>
    <name type="scientific">Cyanidioschyzon merolae (strain NIES-3377 / 10D)</name>
    <name type="common">Unicellular red alga</name>
    <dbReference type="NCBI Taxonomy" id="280699"/>
    <lineage>
        <taxon>Eukaryota</taxon>
        <taxon>Rhodophyta</taxon>
        <taxon>Bangiophyceae</taxon>
        <taxon>Cyanidiales</taxon>
        <taxon>Cyanidiaceae</taxon>
        <taxon>Cyanidioschyzon</taxon>
    </lineage>
</organism>
<comment type="function">
    <text evidence="1">This b-type cytochrome is tightly associated with the reaction center of photosystem II (PSII). PSII is a light-driven water:plastoquinone oxidoreductase that uses light energy to abstract electrons from H(2)O, generating O(2) and a proton gradient subsequently used for ATP formation. It consists of a core antenna complex that captures photons, and an electron transfer chain that converts photonic excitation into a charge separation.</text>
</comment>
<comment type="cofactor">
    <cofactor evidence="1">
        <name>heme b</name>
        <dbReference type="ChEBI" id="CHEBI:60344"/>
    </cofactor>
    <text evidence="1">With its partner (PsbF) binds heme. PSII binds additional chlorophylls, carotenoids and specific lipids.</text>
</comment>
<comment type="subunit">
    <text evidence="1">Heterodimer of an alpha subunit and a beta subunit. PSII is composed of 1 copy each of membrane proteins PsbA, PsbB, PsbC, PsbD, PsbE, PsbF, PsbH, PsbI, PsbJ, PsbK, PsbL, PsbM, PsbT, PsbX, PsbY, PsbZ, Psb30/Ycf12, at least 3 peripheral proteins of the oxygen-evolving complex and a large number of cofactors. It forms dimeric complexes.</text>
</comment>
<comment type="subcellular location">
    <subcellularLocation>
        <location evidence="1">Plastid</location>
        <location evidence="1">Chloroplast thylakoid membrane</location>
        <topology evidence="1">Single-pass membrane protein</topology>
    </subcellularLocation>
</comment>
<comment type="similarity">
    <text evidence="1">Belongs to the PsbE/PsbF family.</text>
</comment>
<accession>Q85FQ2</accession>